<accession>P23622</accession>
<accession>Q7RZ41</accession>
<name>CYS14_NEUCR</name>
<proteinExistence type="evidence at transcript level"/>
<evidence type="ECO:0000255" key="1"/>
<evidence type="ECO:0000255" key="2">
    <source>
        <dbReference type="PROSITE-ProRule" id="PRU00198"/>
    </source>
</evidence>
<evidence type="ECO:0000256" key="3">
    <source>
        <dbReference type="SAM" id="MobiDB-lite"/>
    </source>
</evidence>
<evidence type="ECO:0000305" key="4"/>
<sequence>MASTSTAGDRIKKFLGIPADERLNDTACYVDGSFVESEPTTQDFLNEIRPTVQGTLNYLRELFPFVNWIFHYNLTWLLGDFIAGVTVGFVVVPQGMAYAKLANLAPEYGLYTSFVGFVLYWAFATSKDITIGAVAVMSTIVGNIIANVQKDHPDFDAGDIARTLAFISGAMLLFLGLIRFGFIVEFIPIVAISAFMTGSAISIAAGQVSTLMGIPNINSREETYKVIINTLKGLPNTHLDAAMGLTALFGLYFIRWFCTQMGKRYPRQQRAWFFVSTLRMVFIIILYILVSWLVNRHVKDPKKAHFKILGHVPSGFQHKGAPRLDNEILSAISGDIPTTILVLLIEHIAISKSFGRVNNYIINPSQELVAIGFTNLLGPFLGGYPATGSFSRTAIKAKAGVRTPLAGIFTAVLVLLALYALTSVFFYIPNSALAAMIIHAVGDLITPPREVYKFWLTSPLEVVIFFAGVFVSIFTSIENGIYVTVAASGAVLLWRIAKSPGKFLGQTEIYTAPRELVRGSKDSGLTQSLLQKSEHHTAFLSLDRDDLSNPELQISTPWPGIFVYRFGEGLNYVNSAKHLDNLTIHVFKHTRRTELNKFEKLGDRPWNDPGPRRGQAFLTDELVSRPTLRAIILDFSAVNCIDVTAAQALQDLRNQFDRYAHPDKVEWHFAGVSNRWTKRALVASGFGVDSLRTAKVQRENHKGGVQEVDQGPLVAIGPSVSASDIEAVPVGTSGSGSTDEKRPEGEGGATNGGMEKGSANGEDISTVPTATSADACALARDAGGKRLVPVFGINRPFFHIDVATALKSAVRNTGVVAAE</sequence>
<comment type="function">
    <text>Uptake of sulfate into the cell.</text>
</comment>
<comment type="subcellular location">
    <subcellularLocation>
        <location>Membrane</location>
        <topology>Multi-pass membrane protein</topology>
    </subcellularLocation>
</comment>
<comment type="tissue specificity">
    <text>Mainly found in mycelia.</text>
</comment>
<comment type="induction">
    <text>Highly expressed, but only in cells subject to sulfur limitation, and it is turned on by the positive-acting 'Cys-3' sulfur regulatory protein.</text>
</comment>
<comment type="similarity">
    <text evidence="4">Belongs to the SLC26A/SulP transporter (TC 2.A.53) family.</text>
</comment>
<comment type="sequence caution" evidence="4">
    <conflict type="frameshift">
        <sequence resource="EMBL-CDS" id="AAA33615"/>
    </conflict>
</comment>
<keyword id="KW-0325">Glycoprotein</keyword>
<keyword id="KW-0472">Membrane</keyword>
<keyword id="KW-1185">Reference proteome</keyword>
<keyword id="KW-0812">Transmembrane</keyword>
<keyword id="KW-1133">Transmembrane helix</keyword>
<keyword id="KW-0813">Transport</keyword>
<feature type="chain" id="PRO_0000080183" description="Sulfate permease 2">
    <location>
        <begin position="1"/>
        <end position="819"/>
    </location>
</feature>
<feature type="transmembrane region" description="Helical" evidence="1">
    <location>
        <begin position="72"/>
        <end position="92"/>
    </location>
</feature>
<feature type="transmembrane region" description="Helical" evidence="1">
    <location>
        <begin position="104"/>
        <end position="124"/>
    </location>
</feature>
<feature type="transmembrane region" description="Helical" evidence="1">
    <location>
        <begin position="129"/>
        <end position="149"/>
    </location>
</feature>
<feature type="transmembrane region" description="Helical" evidence="1">
    <location>
        <begin position="172"/>
        <end position="192"/>
    </location>
</feature>
<feature type="transmembrane region" description="Helical" evidence="1">
    <location>
        <begin position="194"/>
        <end position="214"/>
    </location>
</feature>
<feature type="transmembrane region" description="Helical" evidence="1">
    <location>
        <begin position="273"/>
        <end position="293"/>
    </location>
</feature>
<feature type="transmembrane region" description="Helical" evidence="1">
    <location>
        <begin position="328"/>
        <end position="348"/>
    </location>
</feature>
<feature type="transmembrane region" description="Helical" evidence="1">
    <location>
        <begin position="365"/>
        <end position="385"/>
    </location>
</feature>
<feature type="transmembrane region" description="Helical" evidence="1">
    <location>
        <begin position="454"/>
        <end position="474"/>
    </location>
</feature>
<feature type="transmembrane region" description="Helical" evidence="1">
    <location>
        <begin position="477"/>
        <end position="497"/>
    </location>
</feature>
<feature type="domain" description="STAS" evidence="2">
    <location>
        <begin position="551"/>
        <end position="708"/>
    </location>
</feature>
<feature type="region of interest" description="Disordered" evidence="3">
    <location>
        <begin position="726"/>
        <end position="766"/>
    </location>
</feature>
<feature type="compositionally biased region" description="Gly residues" evidence="3">
    <location>
        <begin position="746"/>
        <end position="755"/>
    </location>
</feature>
<feature type="glycosylation site" description="N-linked (GlcNAc...) asparagine" evidence="1">
    <location>
        <position position="24"/>
    </location>
</feature>
<feature type="glycosylation site" description="N-linked (GlcNAc...) asparagine" evidence="1">
    <location>
        <position position="581"/>
    </location>
</feature>
<dbReference type="EMBL" id="M59167">
    <property type="protein sequence ID" value="AAA33615.1"/>
    <property type="status" value="ALT_FRAME"/>
    <property type="molecule type" value="Genomic_DNA"/>
</dbReference>
<dbReference type="EMBL" id="BX908808">
    <property type="protein sequence ID" value="CAF06013.1"/>
    <property type="molecule type" value="Genomic_DNA"/>
</dbReference>
<dbReference type="EMBL" id="CM002239">
    <property type="protein sequence ID" value="EAA28274.3"/>
    <property type="molecule type" value="Genomic_DNA"/>
</dbReference>
<dbReference type="PIR" id="A37956">
    <property type="entry name" value="A37956"/>
</dbReference>
<dbReference type="RefSeq" id="XP_957510.3">
    <property type="nucleotide sequence ID" value="XM_952417.3"/>
</dbReference>
<dbReference type="SMR" id="P23622"/>
<dbReference type="FunCoup" id="P23622">
    <property type="interactions" value="447"/>
</dbReference>
<dbReference type="STRING" id="367110.P23622"/>
<dbReference type="TCDB" id="2.A.53.1.2">
    <property type="family name" value="the sulfate permease (sulp) family"/>
</dbReference>
<dbReference type="GlyCosmos" id="P23622">
    <property type="glycosylation" value="2 sites, No reported glycans"/>
</dbReference>
<dbReference type="EnsemblFungi" id="EAA28274">
    <property type="protein sequence ID" value="EAA28274"/>
    <property type="gene ID" value="NCU04433"/>
</dbReference>
<dbReference type="GeneID" id="3873616"/>
<dbReference type="KEGG" id="ncr:NCU04433"/>
<dbReference type="VEuPathDB" id="FungiDB:NCU04433"/>
<dbReference type="HOGENOM" id="CLU_003182_8_1_1"/>
<dbReference type="InParanoid" id="P23622"/>
<dbReference type="OrthoDB" id="288203at2759"/>
<dbReference type="Proteomes" id="UP000001805">
    <property type="component" value="Chromosome 4, Linkage Group IV"/>
</dbReference>
<dbReference type="GO" id="GO:0005886">
    <property type="term" value="C:plasma membrane"/>
    <property type="evidence" value="ECO:0000318"/>
    <property type="project" value="GO_Central"/>
</dbReference>
<dbReference type="GO" id="GO:0008271">
    <property type="term" value="F:secondary active sulfate transmembrane transporter activity"/>
    <property type="evidence" value="ECO:0007669"/>
    <property type="project" value="InterPro"/>
</dbReference>
<dbReference type="GO" id="GO:0015116">
    <property type="term" value="F:sulfate transmembrane transporter activity"/>
    <property type="evidence" value="ECO:0000318"/>
    <property type="project" value="GO_Central"/>
</dbReference>
<dbReference type="GO" id="GO:1902476">
    <property type="term" value="P:chloride transmembrane transport"/>
    <property type="evidence" value="ECO:0000318"/>
    <property type="project" value="GO_Central"/>
</dbReference>
<dbReference type="GO" id="GO:1902358">
    <property type="term" value="P:sulfate transmembrane transport"/>
    <property type="evidence" value="ECO:0000318"/>
    <property type="project" value="GO_Central"/>
</dbReference>
<dbReference type="CDD" id="cd07042">
    <property type="entry name" value="STAS_SulP_like_sulfate_transporter"/>
    <property type="match status" value="1"/>
</dbReference>
<dbReference type="FunFam" id="3.30.750.24:FF:000024">
    <property type="entry name" value="Sulfate permease 2"/>
    <property type="match status" value="1"/>
</dbReference>
<dbReference type="Gene3D" id="3.30.750.24">
    <property type="entry name" value="STAS domain"/>
    <property type="match status" value="1"/>
</dbReference>
<dbReference type="InterPro" id="IPR018045">
    <property type="entry name" value="S04_transporter_CS"/>
</dbReference>
<dbReference type="InterPro" id="IPR011547">
    <property type="entry name" value="SLC26A/SulP_dom"/>
</dbReference>
<dbReference type="InterPro" id="IPR001902">
    <property type="entry name" value="SLC26A/SulP_fam"/>
</dbReference>
<dbReference type="InterPro" id="IPR002645">
    <property type="entry name" value="STAS_dom"/>
</dbReference>
<dbReference type="InterPro" id="IPR036513">
    <property type="entry name" value="STAS_dom_sf"/>
</dbReference>
<dbReference type="NCBIfam" id="TIGR00815">
    <property type="entry name" value="sulP"/>
    <property type="match status" value="1"/>
</dbReference>
<dbReference type="PANTHER" id="PTHR11814">
    <property type="entry name" value="SULFATE TRANSPORTER"/>
    <property type="match status" value="1"/>
</dbReference>
<dbReference type="Pfam" id="PF01740">
    <property type="entry name" value="STAS"/>
    <property type="match status" value="1"/>
</dbReference>
<dbReference type="Pfam" id="PF00916">
    <property type="entry name" value="Sulfate_transp"/>
    <property type="match status" value="1"/>
</dbReference>
<dbReference type="SUPFAM" id="SSF52091">
    <property type="entry name" value="SpoIIaa-like"/>
    <property type="match status" value="1"/>
</dbReference>
<dbReference type="PROSITE" id="PS01130">
    <property type="entry name" value="SLC26A"/>
    <property type="match status" value="1"/>
</dbReference>
<dbReference type="PROSITE" id="PS50801">
    <property type="entry name" value="STAS"/>
    <property type="match status" value="1"/>
</dbReference>
<reference key="1">
    <citation type="journal article" date="1991" name="Biochemistry">
        <title>Nucleotide sequence, messenger RNA stability, and DNA recognition elements of cys-14, the structural gene for sulfate permease II in Neurospora crassa.</title>
        <authorList>
            <person name="Ketter J.S."/>
            <person name="Jarai G."/>
            <person name="Fu Y.-H."/>
            <person name="Marzluf G.A."/>
        </authorList>
    </citation>
    <scope>NUCLEOTIDE SEQUENCE [GENOMIC DNA]</scope>
</reference>
<reference key="2">
    <citation type="journal article" date="2003" name="Nucleic Acids Res.">
        <title>What's in the genome of a filamentous fungus? Analysis of the Neurospora genome sequence.</title>
        <authorList>
            <person name="Mannhaupt G."/>
            <person name="Montrone C."/>
            <person name="Haase D."/>
            <person name="Mewes H.-W."/>
            <person name="Aign V."/>
            <person name="Hoheisel J.D."/>
            <person name="Fartmann B."/>
            <person name="Nyakatura G."/>
            <person name="Kempken F."/>
            <person name="Maier J."/>
            <person name="Schulte U."/>
        </authorList>
    </citation>
    <scope>NUCLEOTIDE SEQUENCE [LARGE SCALE GENOMIC DNA]</scope>
    <source>
        <strain>ATCC 24698 / 74-OR23-1A / CBS 708.71 / DSM 1257 / FGSC 987</strain>
    </source>
</reference>
<reference key="3">
    <citation type="journal article" date="2003" name="Nature">
        <title>The genome sequence of the filamentous fungus Neurospora crassa.</title>
        <authorList>
            <person name="Galagan J.E."/>
            <person name="Calvo S.E."/>
            <person name="Borkovich K.A."/>
            <person name="Selker E.U."/>
            <person name="Read N.D."/>
            <person name="Jaffe D.B."/>
            <person name="FitzHugh W."/>
            <person name="Ma L.-J."/>
            <person name="Smirnov S."/>
            <person name="Purcell S."/>
            <person name="Rehman B."/>
            <person name="Elkins T."/>
            <person name="Engels R."/>
            <person name="Wang S."/>
            <person name="Nielsen C.B."/>
            <person name="Butler J."/>
            <person name="Endrizzi M."/>
            <person name="Qui D."/>
            <person name="Ianakiev P."/>
            <person name="Bell-Pedersen D."/>
            <person name="Nelson M.A."/>
            <person name="Werner-Washburne M."/>
            <person name="Selitrennikoff C.P."/>
            <person name="Kinsey J.A."/>
            <person name="Braun E.L."/>
            <person name="Zelter A."/>
            <person name="Schulte U."/>
            <person name="Kothe G.O."/>
            <person name="Jedd G."/>
            <person name="Mewes H.-W."/>
            <person name="Staben C."/>
            <person name="Marcotte E."/>
            <person name="Greenberg D."/>
            <person name="Roy A."/>
            <person name="Foley K."/>
            <person name="Naylor J."/>
            <person name="Stange-Thomann N."/>
            <person name="Barrett R."/>
            <person name="Gnerre S."/>
            <person name="Kamal M."/>
            <person name="Kamvysselis M."/>
            <person name="Mauceli E.W."/>
            <person name="Bielke C."/>
            <person name="Rudd S."/>
            <person name="Frishman D."/>
            <person name="Krystofova S."/>
            <person name="Rasmussen C."/>
            <person name="Metzenberg R.L."/>
            <person name="Perkins D.D."/>
            <person name="Kroken S."/>
            <person name="Cogoni C."/>
            <person name="Macino G."/>
            <person name="Catcheside D.E.A."/>
            <person name="Li W."/>
            <person name="Pratt R.J."/>
            <person name="Osmani S.A."/>
            <person name="DeSouza C.P.C."/>
            <person name="Glass N.L."/>
            <person name="Orbach M.J."/>
            <person name="Berglund J.A."/>
            <person name="Voelker R."/>
            <person name="Yarden O."/>
            <person name="Plamann M."/>
            <person name="Seiler S."/>
            <person name="Dunlap J.C."/>
            <person name="Radford A."/>
            <person name="Aramayo R."/>
            <person name="Natvig D.O."/>
            <person name="Alex L.A."/>
            <person name="Mannhaupt G."/>
            <person name="Ebbole D.J."/>
            <person name="Freitag M."/>
            <person name="Paulsen I."/>
            <person name="Sachs M.S."/>
            <person name="Lander E.S."/>
            <person name="Nusbaum C."/>
            <person name="Birren B.W."/>
        </authorList>
    </citation>
    <scope>NUCLEOTIDE SEQUENCE [LARGE SCALE GENOMIC DNA]</scope>
    <source>
        <strain>ATCC 24698 / 74-OR23-1A / CBS 708.71 / DSM 1257 / FGSC 987</strain>
    </source>
</reference>
<reference key="4">
    <citation type="journal article" date="1994" name="Trends Biochem. Sci.">
        <title>Similarities between a soybean nodulin, Neurospora crassa sulphate permease II and a putative human tumour suppressor.</title>
        <authorList>
            <person name="Sandal N.N."/>
            <person name="Marcker K.A."/>
        </authorList>
    </citation>
    <scope>IDENTIFICATION OF SEQUENCE ERRORS IN SEQUENCE DESCRIBED IN PUBMED:1825178</scope>
</reference>
<protein>
    <recommendedName>
        <fullName>Sulfate permease 2</fullName>
    </recommendedName>
    <alternativeName>
        <fullName>Sulfate permease II</fullName>
    </alternativeName>
</protein>
<organism>
    <name type="scientific">Neurospora crassa (strain ATCC 24698 / 74-OR23-1A / CBS 708.71 / DSM 1257 / FGSC 987)</name>
    <dbReference type="NCBI Taxonomy" id="367110"/>
    <lineage>
        <taxon>Eukaryota</taxon>
        <taxon>Fungi</taxon>
        <taxon>Dikarya</taxon>
        <taxon>Ascomycota</taxon>
        <taxon>Pezizomycotina</taxon>
        <taxon>Sordariomycetes</taxon>
        <taxon>Sordariomycetidae</taxon>
        <taxon>Sordariales</taxon>
        <taxon>Sordariaceae</taxon>
        <taxon>Neurospora</taxon>
    </lineage>
</organism>
<gene>
    <name type="primary">cys-14</name>
    <name type="ORF">G21B4.280</name>
    <name type="ORF">NCU04433</name>
</gene>